<gene>
    <name type="ORF">UL24</name>
</gene>
<organismHost>
    <name type="scientific">Homo sapiens</name>
    <name type="common">Human</name>
    <dbReference type="NCBI Taxonomy" id="9606"/>
</organismHost>
<comment type="function">
    <text evidence="3 4 5">May participate in nuclear egress of viral particles. Plays a role in the dispersal of several host nucleolar proteins including NCL/nucleolin and NPM1. Since deletion of host NCL/nucleolin negatively impact on nuclear egress, UL24 supposedly acts on this process through its effect on host nucleoli.</text>
</comment>
<comment type="subcellular location">
    <subcellularLocation>
        <location evidence="1">Virion</location>
    </subcellularLocation>
    <subcellularLocation>
        <location evidence="3">Host cytoplasm</location>
    </subcellularLocation>
    <subcellularLocation>
        <location evidence="3">Host nucleus</location>
        <location evidence="3">Host nucleolus</location>
    </subcellularLocation>
    <subcellularLocation>
        <location evidence="3">Host Golgi apparatus</location>
    </subcellularLocation>
</comment>
<comment type="induction">
    <text>Expressed late in the infection cycle.</text>
</comment>
<comment type="similarity">
    <text evidence="6">Belongs to the herpesviridae UL24 family.</text>
</comment>
<accession>P10208</accession>
<accession>B9VQF1</accession>
<accession>Q09IA9</accession>
<keyword id="KW-1035">Host cytoplasm</keyword>
<keyword id="KW-1040">Host Golgi apparatus</keyword>
<keyword id="KW-1048">Host nucleus</keyword>
<keyword id="KW-1185">Reference proteome</keyword>
<keyword id="KW-0946">Virion</keyword>
<sequence>MAARTRSLVERRRVLMAGVRSHTRFYKALAEEVREFHATKICGTLLTLLSGSLQGRSVFEATRVTLICEVDLGPRRPDCICVFEFANDKTLGGVCVIIELKTCKYISSGDTASKREQRATGMKQLRHSLKLLQSLAPPGDKIVYLCPVLVFVAQRTLRVSRVTRLVPQKVSGNITAVVRMLQSLSTYTVPIEPRTQRARRRRGGAARGSASRPKRSHSGARDPPESAARQLPPADQTPTSTEGGGVLKRIAALFCVPVATKTKPRAASE</sequence>
<name>UL24_HHV11</name>
<proteinExistence type="evidence at protein level"/>
<dbReference type="EMBL" id="X14112">
    <property type="protein sequence ID" value="CAA32316.1"/>
    <property type="molecule type" value="Genomic_DNA"/>
</dbReference>
<dbReference type="EMBL" id="DQ889502">
    <property type="protein sequence ID" value="ABI63486.1"/>
    <property type="molecule type" value="Genomic_DNA"/>
</dbReference>
<dbReference type="EMBL" id="FJ593289">
    <property type="protein sequence ID" value="ACM62246.1"/>
    <property type="molecule type" value="Genomic_DNA"/>
</dbReference>
<dbReference type="PIR" id="F30084">
    <property type="entry name" value="WMBEW4"/>
</dbReference>
<dbReference type="RefSeq" id="YP_009137098.1">
    <property type="nucleotide sequence ID" value="NC_001806.2"/>
</dbReference>
<dbReference type="BioGRID" id="971416">
    <property type="interactions" value="1"/>
</dbReference>
<dbReference type="GeneID" id="24271468"/>
<dbReference type="KEGG" id="vg:24271468"/>
<dbReference type="Proteomes" id="UP000009294">
    <property type="component" value="Segment"/>
</dbReference>
<dbReference type="Proteomes" id="UP000180652">
    <property type="component" value="Segment"/>
</dbReference>
<dbReference type="GO" id="GO:0044177">
    <property type="term" value="C:host cell Golgi apparatus"/>
    <property type="evidence" value="ECO:0007669"/>
    <property type="project" value="UniProtKB-SubCell"/>
</dbReference>
<dbReference type="GO" id="GO:0044196">
    <property type="term" value="C:host cell nucleolus"/>
    <property type="evidence" value="ECO:0007669"/>
    <property type="project" value="UniProtKB-SubCell"/>
</dbReference>
<dbReference type="GO" id="GO:0044423">
    <property type="term" value="C:virion component"/>
    <property type="evidence" value="ECO:0007669"/>
    <property type="project" value="UniProtKB-KW"/>
</dbReference>
<dbReference type="InterPro" id="IPR002580">
    <property type="entry name" value="Herpes_UL24"/>
</dbReference>
<dbReference type="Pfam" id="PF01646">
    <property type="entry name" value="Herpes_UL24"/>
    <property type="match status" value="1"/>
</dbReference>
<feature type="chain" id="PRO_0000115978" description="Protein UL24">
    <location>
        <begin position="1"/>
        <end position="269"/>
    </location>
</feature>
<feature type="region of interest" description="Disordered" evidence="2">
    <location>
        <begin position="191"/>
        <end position="244"/>
    </location>
</feature>
<feature type="sequence variant" description="In strain: Nonneuroinvasive mutant HF10.">
    <original>I</original>
    <variation>M</variation>
    <location>
        <position position="191"/>
    </location>
</feature>
<feature type="sequence variant" description="In strain: Nonneuroinvasive mutant HF10.">
    <original>S</original>
    <variation>P</variation>
    <location>
        <position position="226"/>
    </location>
</feature>
<feature type="sequence variant" description="In strain: Nonneuroinvasive mutant HF10 and 17 syn+.">
    <original>T</original>
    <variation>A</variation>
    <location>
        <position position="239"/>
    </location>
</feature>
<feature type="mutagenesis site" description="Loss of about 75% of host NPM1 and 80% of host NCL dispersal." evidence="4 5">
    <original>ELK</original>
    <variation>ALA</variation>
    <location>
        <begin position="99"/>
        <end position="101"/>
    </location>
</feature>
<protein>
    <recommendedName>
        <fullName>Protein UL24</fullName>
    </recommendedName>
</protein>
<evidence type="ECO:0000250" key="1"/>
<evidence type="ECO:0000256" key="2">
    <source>
        <dbReference type="SAM" id="MobiDB-lite"/>
    </source>
</evidence>
<evidence type="ECO:0000269" key="3">
    <source>
    </source>
</evidence>
<evidence type="ECO:0000269" key="4">
    <source>
    </source>
</evidence>
<evidence type="ECO:0000269" key="5">
    <source>
    </source>
</evidence>
<evidence type="ECO:0000305" key="6"/>
<organism>
    <name type="scientific">Human herpesvirus 1 (strain 17)</name>
    <name type="common">HHV-1</name>
    <name type="synonym">Human herpes simplex virus 1</name>
    <dbReference type="NCBI Taxonomy" id="10299"/>
    <lineage>
        <taxon>Viruses</taxon>
        <taxon>Duplodnaviria</taxon>
        <taxon>Heunggongvirae</taxon>
        <taxon>Peploviricota</taxon>
        <taxon>Herviviricetes</taxon>
        <taxon>Herpesvirales</taxon>
        <taxon>Orthoherpesviridae</taxon>
        <taxon>Alphaherpesvirinae</taxon>
        <taxon>Simplexvirus</taxon>
        <taxon>Simplexvirus humanalpha1</taxon>
        <taxon>Human herpesvirus 1</taxon>
    </lineage>
</organism>
<reference key="1">
    <citation type="journal article" date="1988" name="J. Gen. Virol.">
        <title>The complete DNA sequence of the long unique region in the genome of herpes simplex virus type 1.</title>
        <authorList>
            <person name="McGeoch D.J."/>
            <person name="Dalrymple M.A."/>
            <person name="Davison A.J."/>
            <person name="Dolan A."/>
            <person name="Frame M.C."/>
            <person name="McNab D."/>
            <person name="Perry L.J."/>
            <person name="Scott J.E."/>
            <person name="Taylor P."/>
        </authorList>
    </citation>
    <scope>NUCLEOTIDE SEQUENCE [LARGE SCALE GENOMIC DNA]</scope>
</reference>
<reference key="2">
    <citation type="journal article" date="2007" name="Microbes Infect.">
        <title>Determination and analysis of the DNA sequence of highly attenuated herpes simplex virus type 1 mutant HF10, a potential oncolytic virus.</title>
        <authorList>
            <person name="Ushijima Y."/>
            <person name="Luo C."/>
            <person name="Goshima F."/>
            <person name="Yamauchi Y."/>
            <person name="Kimura H."/>
            <person name="Nishiyama Y."/>
        </authorList>
    </citation>
    <scope>NUCLEOTIDE SEQUENCE [LARGE SCALE GENOMIC DNA]</scope>
    <source>
        <strain>Nonneuroinvasive mutant HF10</strain>
    </source>
</reference>
<reference key="3">
    <citation type="submission" date="2008-12" db="EMBL/GenBank/DDBJ databases">
        <title>Herpes simplex virus type 1 bacterial artificial chromosome.</title>
        <authorList>
            <person name="Cunningham C."/>
            <person name="Davison A.J."/>
        </authorList>
    </citation>
    <scope>NUCLEOTIDE SEQUENCE [LARGE SCALE GENOMIC DNA]</scope>
    <source>
        <strain>17 syn+</strain>
    </source>
</reference>
<reference key="4">
    <citation type="journal article" date="2008" name="J. Gen. Virol.">
        <title>The conserved N-terminal domain of herpes simplex virus 1 UL24 protein is sufficient to induce the spatial redistribution of nucleolin.</title>
        <authorList>
            <person name="Bertrand L."/>
            <person name="Pearson A."/>
        </authorList>
    </citation>
    <scope>FUNCTION</scope>
    <scope>SUBCELLULAR LOCATION</scope>
</reference>
<reference key="5">
    <citation type="journal article" date="2010" name="J. Virol.">
        <title>Conserved residues in the UL24 protein of herpes simplex virus 1 are important for dispersal of the nucleolar protein nucleolin.</title>
        <authorList>
            <person name="Bertrand L."/>
            <person name="Leiva-Torres G.A."/>
            <person name="Hyjazie H."/>
            <person name="Pearson A."/>
        </authorList>
    </citation>
    <scope>FUNCTION</scope>
    <scope>MUTAGENESIS OF 99-ASP--LYS-101</scope>
</reference>
<reference key="6">
    <citation type="journal article" date="2011" name="Virology">
        <title>Involvement of the UL24 protein in herpes simplex virus 1-induced dispersal of B23 and in nuclear egress.</title>
        <authorList>
            <person name="Lymberopoulos M.H."/>
            <person name="Bourget A."/>
            <person name="Abdeljelil N.B."/>
            <person name="Pearson A."/>
        </authorList>
    </citation>
    <scope>FUNCTION</scope>
    <scope>MUTAGENESIS OF 99-ASP--LYS-101</scope>
    <source>
        <strain>KOS</strain>
    </source>
</reference>